<sequence>MASGQGPGPPKVGCDESPSPSEQQVAQDTEEVFRSYVFYLHQQEQETQGAAAPANPEMDNLPLEPNSILGQVGRQLALIGDDINRRYDTEFQNLLEQLQPTAGNAYELFTKIASSLFKSGISWGRVVALLGFGYRLALYVYQRGLTGFLGQVTCFLADIILHHYIARWIAQRGGWVAALNFRRDPILTVMVIFGVVLLGQFVVHRFFRS</sequence>
<protein>
    <recommendedName>
        <fullName>Bcl-2 homologous antagonist/killer</fullName>
    </recommendedName>
    <alternativeName>
        <fullName>Apoptosis regulator BAK</fullName>
    </alternativeName>
</protein>
<proteinExistence type="evidence at protein level"/>
<gene>
    <name type="primary">Bak1</name>
    <name type="synonym">Bak</name>
</gene>
<comment type="function">
    <text evidence="1">In the presence of an appropriate stimulus, accelerates programmed cell death by binding to, and antagonizing the anti-apoptotic action of BCL2.</text>
</comment>
<comment type="subunit">
    <text evidence="2 5 7">Homodimer. Formation of the homodimer is zinc-dependent. Forms heterodimers with BCL2 and BCL2L1 isoform Bcl-X(L). Forms heterooligomers with BAX (By similarity). Interacts with BCL2A1 (PubMed:18462686). Interacts withRTL10/BOP (PubMed:18462686). Interacts with VDAC1 (By similarity). Interacts with GIMAP3/IAN4 and GIMAP5/IAN5 (PubMed:16509771).</text>
</comment>
<comment type="subunit">
    <text evidence="6">(Microbial infection) Interacts with gamma-herpesvirus 68 protein vBCL2.</text>
</comment>
<comment type="interaction">
    <interactant intactId="EBI-822441">
        <id>O08734</id>
    </interactant>
    <interactant intactId="EBI-707754">
        <id>Q07440</id>
        <label>Bcl2a1</label>
    </interactant>
    <organismsDiffer>false</organismsDiffer>
    <experiments>2</experiments>
</comment>
<comment type="interaction">
    <interactant intactId="EBI-822441">
        <id>O08734</id>
    </interactant>
    <interactant intactId="EBI-707292">
        <id>P97287</id>
        <label>Mcl1</label>
    </interactant>
    <organismsDiffer>false</organismsDiffer>
    <experiments>2</experiments>
</comment>
<comment type="interaction">
    <interactant intactId="EBI-822441">
        <id>O08734</id>
    </interactant>
    <interactant intactId="EBI-8437663">
        <id>Q80U63</id>
        <label>Mfn2</label>
    </interactant>
    <organismsDiffer>false</organismsDiffer>
    <experiments>2</experiments>
</comment>
<comment type="interaction">
    <interactant intactId="EBI-822441">
        <id>O08734</id>
    </interactant>
    <interactant intactId="EBI-444578">
        <id>Q60930</id>
        <label>Vdac2</label>
    </interactant>
    <organismsDiffer>false</organismsDiffer>
    <experiments>3</experiments>
</comment>
<comment type="interaction">
    <interactant intactId="EBI-822441">
        <id>O08734</id>
    </interactant>
    <interactant intactId="EBI-371750">
        <id>O75460</id>
        <label>ERN1</label>
    </interactant>
    <organismsDiffer>true</organismsDiffer>
    <experiments>2</experiments>
</comment>
<comment type="subcellular location">
    <subcellularLocation>
        <location evidence="2">Mitochondrion outer membrane</location>
        <topology evidence="3">Single-pass membrane protein</topology>
    </subcellularLocation>
</comment>
<comment type="tissue specificity">
    <text>Widely expressed.</text>
</comment>
<comment type="domain">
    <text evidence="1">Intact BH3 motif is required by BIK, BID, BAK, BAD and BAX for their pro-apoptotic activity and for their interaction with anti-apoptotic members of the Bcl-2 family.</text>
</comment>
<comment type="similarity">
    <text evidence="8">Belongs to the Bcl-2 family.</text>
</comment>
<comment type="sequence caution">
    <conflict type="frameshift">
        <sequence resource="EMBL-CDS" id="CAA73684"/>
    </conflict>
</comment>
<name>BAK_MOUSE</name>
<organism>
    <name type="scientific">Mus musculus</name>
    <name type="common">Mouse</name>
    <dbReference type="NCBI Taxonomy" id="10090"/>
    <lineage>
        <taxon>Eukaryota</taxon>
        <taxon>Metazoa</taxon>
        <taxon>Chordata</taxon>
        <taxon>Craniata</taxon>
        <taxon>Vertebrata</taxon>
        <taxon>Euteleostomi</taxon>
        <taxon>Mammalia</taxon>
        <taxon>Eutheria</taxon>
        <taxon>Euarchontoglires</taxon>
        <taxon>Glires</taxon>
        <taxon>Rodentia</taxon>
        <taxon>Myomorpha</taxon>
        <taxon>Muroidea</taxon>
        <taxon>Muridae</taxon>
        <taxon>Murinae</taxon>
        <taxon>Mus</taxon>
        <taxon>Mus</taxon>
    </lineage>
</organism>
<evidence type="ECO:0000250" key="1"/>
<evidence type="ECO:0000250" key="2">
    <source>
        <dbReference type="UniProtKB" id="Q16611"/>
    </source>
</evidence>
<evidence type="ECO:0000255" key="3"/>
<evidence type="ECO:0000256" key="4">
    <source>
        <dbReference type="SAM" id="MobiDB-lite"/>
    </source>
</evidence>
<evidence type="ECO:0000269" key="5">
    <source>
    </source>
</evidence>
<evidence type="ECO:0000269" key="6">
    <source>
    </source>
</evidence>
<evidence type="ECO:0000269" key="7">
    <source>
    </source>
</evidence>
<evidence type="ECO:0000305" key="8"/>
<evidence type="ECO:0007829" key="9">
    <source>
        <dbReference type="PDB" id="6MCY"/>
    </source>
</evidence>
<dbReference type="EMBL" id="Y13231">
    <property type="protein sequence ID" value="CAA73684.1"/>
    <property type="status" value="ALT_FRAME"/>
    <property type="molecule type" value="mRNA"/>
</dbReference>
<dbReference type="EMBL" id="AK089220">
    <property type="protein sequence ID" value="BAC40796.1"/>
    <property type="molecule type" value="mRNA"/>
</dbReference>
<dbReference type="EMBL" id="AC132404">
    <property type="status" value="NOT_ANNOTATED_CDS"/>
    <property type="molecule type" value="Genomic_DNA"/>
</dbReference>
<dbReference type="CCDS" id="CCDS28558.1"/>
<dbReference type="RefSeq" id="NP_031549.2">
    <property type="nucleotide sequence ID" value="NM_007523.3"/>
</dbReference>
<dbReference type="PDB" id="2VOH">
    <property type="method" value="X-ray"/>
    <property type="resolution" value="1.90 A"/>
    <property type="chains" value="B=65-90"/>
</dbReference>
<dbReference type="PDB" id="5FMJ">
    <property type="method" value="X-ray"/>
    <property type="resolution" value="2.43 A"/>
    <property type="chains" value="B=61-94"/>
</dbReference>
<dbReference type="PDB" id="5KTG">
    <property type="method" value="X-ray"/>
    <property type="resolution" value="2.80 A"/>
    <property type="chains" value="A/B=66-144"/>
</dbReference>
<dbReference type="PDB" id="6MCY">
    <property type="method" value="X-ray"/>
    <property type="resolution" value="1.75 A"/>
    <property type="chains" value="A/B/C/D=21-184"/>
</dbReference>
<dbReference type="PDBsum" id="2VOH"/>
<dbReference type="PDBsum" id="5FMJ"/>
<dbReference type="PDBsum" id="5KTG"/>
<dbReference type="PDBsum" id="6MCY"/>
<dbReference type="SMR" id="O08734"/>
<dbReference type="ComplexPortal" id="CPX-2033">
    <property type="entry name" value="BAK1 oligomer"/>
</dbReference>
<dbReference type="CORUM" id="O08734"/>
<dbReference type="DIP" id="DIP-29807N"/>
<dbReference type="FunCoup" id="O08734">
    <property type="interactions" value="276"/>
</dbReference>
<dbReference type="IntAct" id="O08734">
    <property type="interactions" value="11"/>
</dbReference>
<dbReference type="MINT" id="O08734"/>
<dbReference type="STRING" id="10090.ENSMUSP00000077757"/>
<dbReference type="iPTMnet" id="O08734"/>
<dbReference type="PhosphoSitePlus" id="O08734"/>
<dbReference type="SwissPalm" id="O08734"/>
<dbReference type="jPOST" id="O08734"/>
<dbReference type="PaxDb" id="10090-ENSMUSP00000077757"/>
<dbReference type="PeptideAtlas" id="O08734"/>
<dbReference type="ProteomicsDB" id="273535"/>
<dbReference type="Pumba" id="O08734"/>
<dbReference type="TopDownProteomics" id="O08734"/>
<dbReference type="Antibodypedia" id="3556">
    <property type="antibodies" value="757 antibodies from 45 providers"/>
</dbReference>
<dbReference type="DNASU" id="12018"/>
<dbReference type="Ensembl" id="ENSMUST00000078691.12">
    <property type="protein sequence ID" value="ENSMUSP00000077757.6"/>
    <property type="gene ID" value="ENSMUSG00000057789.15"/>
</dbReference>
<dbReference type="GeneID" id="12018"/>
<dbReference type="KEGG" id="mmu:12018"/>
<dbReference type="UCSC" id="uc008bff.1">
    <property type="organism name" value="mouse"/>
</dbReference>
<dbReference type="AGR" id="MGI:1097161"/>
<dbReference type="CTD" id="578"/>
<dbReference type="MGI" id="MGI:1097161">
    <property type="gene designation" value="Bak1"/>
</dbReference>
<dbReference type="VEuPathDB" id="HostDB:ENSMUSG00000057789"/>
<dbReference type="eggNOG" id="KOG4728">
    <property type="taxonomic scope" value="Eukaryota"/>
</dbReference>
<dbReference type="GeneTree" id="ENSGT01130000278292"/>
<dbReference type="HOGENOM" id="CLU_085401_1_1_1"/>
<dbReference type="InParanoid" id="O08734"/>
<dbReference type="OMA" id="HYIARWI"/>
<dbReference type="OrthoDB" id="6020735at2759"/>
<dbReference type="PhylomeDB" id="O08734"/>
<dbReference type="TreeFam" id="TF315834"/>
<dbReference type="Reactome" id="R-MMU-111452">
    <property type="pathway name" value="Activation and oligomerization of BAK protein"/>
</dbReference>
<dbReference type="Reactome" id="R-MMU-111457">
    <property type="pathway name" value="Release of apoptotic factors from the mitochondria"/>
</dbReference>
<dbReference type="Reactome" id="R-MMU-5620971">
    <property type="pathway name" value="Pyroptosis"/>
</dbReference>
<dbReference type="BioGRID-ORCS" id="12018">
    <property type="hits" value="1 hit in 78 CRISPR screens"/>
</dbReference>
<dbReference type="ChiTaRS" id="Bak1">
    <property type="organism name" value="mouse"/>
</dbReference>
<dbReference type="EvolutionaryTrace" id="O08734"/>
<dbReference type="PRO" id="PR:O08734"/>
<dbReference type="Proteomes" id="UP000000589">
    <property type="component" value="Chromosome 17"/>
</dbReference>
<dbReference type="RNAct" id="O08734">
    <property type="molecule type" value="protein"/>
</dbReference>
<dbReference type="Bgee" id="ENSMUSG00000057789">
    <property type="expression patterns" value="Expressed in ear vesicle and 203 other cell types or tissues"/>
</dbReference>
<dbReference type="ExpressionAtlas" id="O08734">
    <property type="expression patterns" value="baseline and differential"/>
</dbReference>
<dbReference type="GO" id="GO:0097145">
    <property type="term" value="C:BAK complex"/>
    <property type="evidence" value="ECO:0000314"/>
    <property type="project" value="ARUK-UCL"/>
</dbReference>
<dbReference type="GO" id="GO:0005829">
    <property type="term" value="C:cytosol"/>
    <property type="evidence" value="ECO:0000314"/>
    <property type="project" value="MGI"/>
</dbReference>
<dbReference type="GO" id="GO:0005783">
    <property type="term" value="C:endoplasmic reticulum"/>
    <property type="evidence" value="ECO:0000314"/>
    <property type="project" value="MGI"/>
</dbReference>
<dbReference type="GO" id="GO:0031966">
    <property type="term" value="C:mitochondrial membrane"/>
    <property type="evidence" value="ECO:0000314"/>
    <property type="project" value="MGI"/>
</dbReference>
<dbReference type="GO" id="GO:0005741">
    <property type="term" value="C:mitochondrial outer membrane"/>
    <property type="evidence" value="ECO:0000314"/>
    <property type="project" value="BHF-UCL"/>
</dbReference>
<dbReference type="GO" id="GO:0005739">
    <property type="term" value="C:mitochondrion"/>
    <property type="evidence" value="ECO:0000314"/>
    <property type="project" value="MGI"/>
</dbReference>
<dbReference type="GO" id="GO:0046930">
    <property type="term" value="C:pore complex"/>
    <property type="evidence" value="ECO:0000250"/>
    <property type="project" value="HGNC-UCL"/>
</dbReference>
<dbReference type="GO" id="GO:0051400">
    <property type="term" value="F:BH domain binding"/>
    <property type="evidence" value="ECO:0007669"/>
    <property type="project" value="Ensembl"/>
</dbReference>
<dbReference type="GO" id="GO:0031072">
    <property type="term" value="F:heat shock protein binding"/>
    <property type="evidence" value="ECO:0007669"/>
    <property type="project" value="Ensembl"/>
</dbReference>
<dbReference type="GO" id="GO:0042802">
    <property type="term" value="F:identical protein binding"/>
    <property type="evidence" value="ECO:0000353"/>
    <property type="project" value="ARUK-UCL"/>
</dbReference>
<dbReference type="GO" id="GO:0046872">
    <property type="term" value="F:metal ion binding"/>
    <property type="evidence" value="ECO:0007669"/>
    <property type="project" value="UniProtKB-KW"/>
</dbReference>
<dbReference type="GO" id="GO:0015288">
    <property type="term" value="F:porin activity"/>
    <property type="evidence" value="ECO:0007669"/>
    <property type="project" value="Ensembl"/>
</dbReference>
<dbReference type="GO" id="GO:0046982">
    <property type="term" value="F:protein heterodimerization activity"/>
    <property type="evidence" value="ECO:0007669"/>
    <property type="project" value="Ensembl"/>
</dbReference>
<dbReference type="GO" id="GO:0042803">
    <property type="term" value="F:protein homodimerization activity"/>
    <property type="evidence" value="ECO:0007669"/>
    <property type="project" value="Ensembl"/>
</dbReference>
<dbReference type="GO" id="GO:0044877">
    <property type="term" value="F:protein-containing complex binding"/>
    <property type="evidence" value="ECO:0007669"/>
    <property type="project" value="Ensembl"/>
</dbReference>
<dbReference type="GO" id="GO:0051087">
    <property type="term" value="F:protein-folding chaperone binding"/>
    <property type="evidence" value="ECO:0007669"/>
    <property type="project" value="Ensembl"/>
</dbReference>
<dbReference type="GO" id="GO:0044325">
    <property type="term" value="F:transmembrane transporter binding"/>
    <property type="evidence" value="ECO:0007669"/>
    <property type="project" value="Ensembl"/>
</dbReference>
<dbReference type="GO" id="GO:0031100">
    <property type="term" value="P:animal organ regeneration"/>
    <property type="evidence" value="ECO:0007669"/>
    <property type="project" value="Ensembl"/>
</dbReference>
<dbReference type="GO" id="GO:1902262">
    <property type="term" value="P:apoptotic process involved in blood vessel morphogenesis"/>
    <property type="evidence" value="ECO:0000316"/>
    <property type="project" value="MGI"/>
</dbReference>
<dbReference type="GO" id="GO:0001783">
    <property type="term" value="P:B cell apoptotic process"/>
    <property type="evidence" value="ECO:0000316"/>
    <property type="project" value="MGI"/>
</dbReference>
<dbReference type="GO" id="GO:0001782">
    <property type="term" value="P:B cell homeostasis"/>
    <property type="evidence" value="ECO:0000315"/>
    <property type="project" value="MGI"/>
</dbReference>
<dbReference type="GO" id="GO:0002352">
    <property type="term" value="P:B cell negative selection"/>
    <property type="evidence" value="ECO:0000316"/>
    <property type="project" value="MGI"/>
</dbReference>
<dbReference type="GO" id="GO:0001974">
    <property type="term" value="P:blood vessel remodeling"/>
    <property type="evidence" value="ECO:0000316"/>
    <property type="project" value="MGI"/>
</dbReference>
<dbReference type="GO" id="GO:0060402">
    <property type="term" value="P:calcium ion transport into cytosol"/>
    <property type="evidence" value="ECO:0000316"/>
    <property type="project" value="MGI"/>
</dbReference>
<dbReference type="GO" id="GO:0071260">
    <property type="term" value="P:cellular response to mechanical stimulus"/>
    <property type="evidence" value="ECO:0007669"/>
    <property type="project" value="Ensembl"/>
</dbReference>
<dbReference type="GO" id="GO:0034644">
    <property type="term" value="P:cellular response to UV"/>
    <property type="evidence" value="ECO:0000315"/>
    <property type="project" value="UniProtKB"/>
</dbReference>
<dbReference type="GO" id="GO:0031018">
    <property type="term" value="P:endocrine pancreas development"/>
    <property type="evidence" value="ECO:0007669"/>
    <property type="project" value="Ensembl"/>
</dbReference>
<dbReference type="GO" id="GO:0050673">
    <property type="term" value="P:epithelial cell proliferation"/>
    <property type="evidence" value="ECO:0000314"/>
    <property type="project" value="MGI"/>
</dbReference>
<dbReference type="GO" id="GO:0051649">
    <property type="term" value="P:establishment of localization in cell"/>
    <property type="evidence" value="ECO:0000316"/>
    <property type="project" value="MGI"/>
</dbReference>
<dbReference type="GO" id="GO:0010248">
    <property type="term" value="P:establishment or maintenance of transmembrane electrochemical gradient"/>
    <property type="evidence" value="ECO:0000250"/>
    <property type="project" value="HGNC-UCL"/>
</dbReference>
<dbReference type="GO" id="GO:0097192">
    <property type="term" value="P:extrinsic apoptotic signaling pathway in absence of ligand"/>
    <property type="evidence" value="ECO:0000316"/>
    <property type="project" value="MGI"/>
</dbReference>
<dbReference type="GO" id="GO:0044346">
    <property type="term" value="P:fibroblast apoptotic process"/>
    <property type="evidence" value="ECO:0000315"/>
    <property type="project" value="MGI"/>
</dbReference>
<dbReference type="GO" id="GO:0048872">
    <property type="term" value="P:homeostasis of number of cells"/>
    <property type="evidence" value="ECO:0000316"/>
    <property type="project" value="MGI"/>
</dbReference>
<dbReference type="GO" id="GO:0008630">
    <property type="term" value="P:intrinsic apoptotic signaling pathway in response to DNA damage"/>
    <property type="evidence" value="ECO:0000315"/>
    <property type="project" value="MGI"/>
</dbReference>
<dbReference type="GO" id="GO:0070059">
    <property type="term" value="P:intrinsic apoptotic signaling pathway in response to endoplasmic reticulum stress"/>
    <property type="evidence" value="ECO:0000316"/>
    <property type="project" value="MGI"/>
</dbReference>
<dbReference type="GO" id="GO:0001776">
    <property type="term" value="P:leukocyte homeostasis"/>
    <property type="evidence" value="ECO:0000316"/>
    <property type="project" value="MGI"/>
</dbReference>
<dbReference type="GO" id="GO:0035108">
    <property type="term" value="P:limb morphogenesis"/>
    <property type="evidence" value="ECO:0000316"/>
    <property type="project" value="MGI"/>
</dbReference>
<dbReference type="GO" id="GO:0008053">
    <property type="term" value="P:mitochondrial fusion"/>
    <property type="evidence" value="ECO:0000316"/>
    <property type="project" value="MGI"/>
</dbReference>
<dbReference type="GO" id="GO:0002262">
    <property type="term" value="P:myeloid cell homeostasis"/>
    <property type="evidence" value="ECO:0000316"/>
    <property type="project" value="MGI"/>
</dbReference>
<dbReference type="GO" id="GO:0008285">
    <property type="term" value="P:negative regulation of cell population proliferation"/>
    <property type="evidence" value="ECO:0007669"/>
    <property type="project" value="Ensembl"/>
</dbReference>
<dbReference type="GO" id="GO:0032471">
    <property type="term" value="P:negative regulation of endoplasmic reticulum calcium ion concentration"/>
    <property type="evidence" value="ECO:0000316"/>
    <property type="project" value="MGI"/>
</dbReference>
<dbReference type="GO" id="GO:0010629">
    <property type="term" value="P:negative regulation of gene expression"/>
    <property type="evidence" value="ECO:0007669"/>
    <property type="project" value="Ensembl"/>
</dbReference>
<dbReference type="GO" id="GO:1901029">
    <property type="term" value="P:negative regulation of mitochondrial outer membrane permeabilization involved in apoptotic signaling pathway"/>
    <property type="evidence" value="ECO:0007669"/>
    <property type="project" value="Ensembl"/>
</dbReference>
<dbReference type="GO" id="GO:0090201">
    <property type="term" value="P:negative regulation of release of cytochrome c from mitochondria"/>
    <property type="evidence" value="ECO:0007669"/>
    <property type="project" value="Ensembl"/>
</dbReference>
<dbReference type="GO" id="GO:0043065">
    <property type="term" value="P:positive regulation of apoptotic process"/>
    <property type="evidence" value="ECO:0000315"/>
    <property type="project" value="UniProtKB"/>
</dbReference>
<dbReference type="GO" id="GO:0010524">
    <property type="term" value="P:positive regulation of calcium ion transport into cytosol"/>
    <property type="evidence" value="ECO:0000316"/>
    <property type="project" value="MGI"/>
</dbReference>
<dbReference type="GO" id="GO:1901030">
    <property type="term" value="P:positive regulation of mitochondrial outer membrane permeabilization involved in apoptotic signaling pathway"/>
    <property type="evidence" value="ECO:0000303"/>
    <property type="project" value="ComplexPortal"/>
</dbReference>
<dbReference type="GO" id="GO:0031334">
    <property type="term" value="P:positive regulation of protein-containing complex assembly"/>
    <property type="evidence" value="ECO:0007669"/>
    <property type="project" value="Ensembl"/>
</dbReference>
<dbReference type="GO" id="GO:0045862">
    <property type="term" value="P:positive regulation of proteolysis"/>
    <property type="evidence" value="ECO:0007669"/>
    <property type="project" value="Ensembl"/>
</dbReference>
<dbReference type="GO" id="GO:0090200">
    <property type="term" value="P:positive regulation of release of cytochrome c from mitochondria"/>
    <property type="evidence" value="ECO:0000303"/>
    <property type="project" value="ComplexPortal"/>
</dbReference>
<dbReference type="GO" id="GO:0048597">
    <property type="term" value="P:post-embryonic camera-type eye morphogenesis"/>
    <property type="evidence" value="ECO:0000316"/>
    <property type="project" value="MGI"/>
</dbReference>
<dbReference type="GO" id="GO:0051726">
    <property type="term" value="P:regulation of cell cycle"/>
    <property type="evidence" value="ECO:0000316"/>
    <property type="project" value="MGI"/>
</dbReference>
<dbReference type="GO" id="GO:0046902">
    <property type="term" value="P:regulation of mitochondrial membrane permeability"/>
    <property type="evidence" value="ECO:0000250"/>
    <property type="project" value="HGNC-UCL"/>
</dbReference>
<dbReference type="GO" id="GO:0051881">
    <property type="term" value="P:regulation of mitochondrial membrane potential"/>
    <property type="evidence" value="ECO:0000250"/>
    <property type="project" value="HGNC-UCL"/>
</dbReference>
<dbReference type="GO" id="GO:0001836">
    <property type="term" value="P:release of cytochrome c from mitochondria"/>
    <property type="evidence" value="ECO:0000315"/>
    <property type="project" value="BHF-UCL"/>
</dbReference>
<dbReference type="GO" id="GO:0045471">
    <property type="term" value="P:response to ethanol"/>
    <property type="evidence" value="ECO:0007669"/>
    <property type="project" value="Ensembl"/>
</dbReference>
<dbReference type="GO" id="GO:0009620">
    <property type="term" value="P:response to fungus"/>
    <property type="evidence" value="ECO:0000315"/>
    <property type="project" value="MGI"/>
</dbReference>
<dbReference type="GO" id="GO:0010332">
    <property type="term" value="P:response to gamma radiation"/>
    <property type="evidence" value="ECO:0000315"/>
    <property type="project" value="MGI"/>
</dbReference>
<dbReference type="GO" id="GO:0042542">
    <property type="term" value="P:response to hydrogen peroxide"/>
    <property type="evidence" value="ECO:0007669"/>
    <property type="project" value="Ensembl"/>
</dbReference>
<dbReference type="GO" id="GO:0010046">
    <property type="term" value="P:response to mycotoxin"/>
    <property type="evidence" value="ECO:0000315"/>
    <property type="project" value="MGI"/>
</dbReference>
<dbReference type="GO" id="GO:0010225">
    <property type="term" value="P:response to UV-C"/>
    <property type="evidence" value="ECO:0007669"/>
    <property type="project" value="Ensembl"/>
</dbReference>
<dbReference type="GO" id="GO:0009410">
    <property type="term" value="P:response to xenobiotic stimulus"/>
    <property type="evidence" value="ECO:0007669"/>
    <property type="project" value="Ensembl"/>
</dbReference>
<dbReference type="GO" id="GO:0070242">
    <property type="term" value="P:thymocyte apoptotic process"/>
    <property type="evidence" value="ECO:0000316"/>
    <property type="project" value="MGI"/>
</dbReference>
<dbReference type="GO" id="GO:0060068">
    <property type="term" value="P:vagina development"/>
    <property type="evidence" value="ECO:0000316"/>
    <property type="project" value="MGI"/>
</dbReference>
<dbReference type="CDD" id="cd06845">
    <property type="entry name" value="Bcl-2_like"/>
    <property type="match status" value="1"/>
</dbReference>
<dbReference type="FunFam" id="1.10.437.10:FF:000007">
    <property type="entry name" value="bcl-2 homologous antagonist/killer"/>
    <property type="match status" value="1"/>
</dbReference>
<dbReference type="Gene3D" id="1.10.437.10">
    <property type="entry name" value="Blc2-like"/>
    <property type="match status" value="1"/>
</dbReference>
<dbReference type="InterPro" id="IPR036834">
    <property type="entry name" value="Bcl-2-like_sf"/>
</dbReference>
<dbReference type="InterPro" id="IPR046371">
    <property type="entry name" value="Bcl-2_BH1-3"/>
</dbReference>
<dbReference type="InterPro" id="IPR026298">
    <property type="entry name" value="Bcl-2_fam"/>
</dbReference>
<dbReference type="InterPro" id="IPR002475">
    <property type="entry name" value="Bcl2-like"/>
</dbReference>
<dbReference type="InterPro" id="IPR020717">
    <property type="entry name" value="Bcl2_BH1_motif_CS"/>
</dbReference>
<dbReference type="InterPro" id="IPR020726">
    <property type="entry name" value="Bcl2_BH2_motif_CS"/>
</dbReference>
<dbReference type="InterPro" id="IPR020728">
    <property type="entry name" value="Bcl2_BH3_motif_CS"/>
</dbReference>
<dbReference type="PANTHER" id="PTHR11256:SF41">
    <property type="entry name" value="BCL-2 HOMOLOGOUS ANTAGONIST_KILLER"/>
    <property type="match status" value="1"/>
</dbReference>
<dbReference type="PANTHER" id="PTHR11256">
    <property type="entry name" value="BCL-2 RELATED"/>
    <property type="match status" value="1"/>
</dbReference>
<dbReference type="Pfam" id="PF00452">
    <property type="entry name" value="Bcl-2"/>
    <property type="match status" value="1"/>
</dbReference>
<dbReference type="PRINTS" id="PR01862">
    <property type="entry name" value="BCL2FAMILY"/>
</dbReference>
<dbReference type="SMART" id="SM00337">
    <property type="entry name" value="BCL"/>
    <property type="match status" value="1"/>
</dbReference>
<dbReference type="SUPFAM" id="SSF56854">
    <property type="entry name" value="Bcl-2 inhibitors of programmed cell death"/>
    <property type="match status" value="1"/>
</dbReference>
<dbReference type="PROSITE" id="PS50062">
    <property type="entry name" value="BCL2_FAMILY"/>
    <property type="match status" value="1"/>
</dbReference>
<dbReference type="PROSITE" id="PS01080">
    <property type="entry name" value="BH1"/>
    <property type="match status" value="1"/>
</dbReference>
<dbReference type="PROSITE" id="PS01258">
    <property type="entry name" value="BH2"/>
    <property type="match status" value="1"/>
</dbReference>
<dbReference type="PROSITE" id="PS01259">
    <property type="entry name" value="BH3"/>
    <property type="match status" value="1"/>
</dbReference>
<accession>O08734</accession>
<accession>E9QM21</accession>
<accession>Q8C264</accession>
<keyword id="KW-0002">3D-structure</keyword>
<keyword id="KW-0007">Acetylation</keyword>
<keyword id="KW-0053">Apoptosis</keyword>
<keyword id="KW-0945">Host-virus interaction</keyword>
<keyword id="KW-0472">Membrane</keyword>
<keyword id="KW-0479">Metal-binding</keyword>
<keyword id="KW-0496">Mitochondrion</keyword>
<keyword id="KW-1000">Mitochondrion outer membrane</keyword>
<keyword id="KW-1185">Reference proteome</keyword>
<keyword id="KW-0812">Transmembrane</keyword>
<keyword id="KW-1133">Transmembrane helix</keyword>
<keyword id="KW-0862">Zinc</keyword>
<feature type="initiator methionine" description="Removed" evidence="2">
    <location>
        <position position="1"/>
    </location>
</feature>
<feature type="chain" id="PRO_0000143060" description="Bcl-2 homologous antagonist/killer">
    <location>
        <begin position="2"/>
        <end position="209"/>
    </location>
</feature>
<feature type="transmembrane region" description="Helical" evidence="3">
    <location>
        <begin position="186"/>
        <end position="203"/>
    </location>
</feature>
<feature type="region of interest" description="Disordered" evidence="4">
    <location>
        <begin position="1"/>
        <end position="28"/>
    </location>
</feature>
<feature type="short sequence motif" description="BH3">
    <location>
        <begin position="72"/>
        <end position="86"/>
    </location>
</feature>
<feature type="short sequence motif" description="BH1">
    <location>
        <begin position="115"/>
        <end position="134"/>
    </location>
</feature>
<feature type="short sequence motif" description="BH2">
    <location>
        <begin position="167"/>
        <end position="182"/>
    </location>
</feature>
<feature type="compositionally biased region" description="Polar residues" evidence="4">
    <location>
        <begin position="18"/>
        <end position="27"/>
    </location>
</feature>
<feature type="binding site" evidence="1">
    <location>
        <position position="158"/>
    </location>
    <ligand>
        <name>Zn(2+)</name>
        <dbReference type="ChEBI" id="CHEBI:29105"/>
        <note>ligand shared between dimeric partners</note>
    </ligand>
</feature>
<feature type="binding site" evidence="1">
    <location>
        <position position="162"/>
    </location>
    <ligand>
        <name>Zn(2+)</name>
        <dbReference type="ChEBI" id="CHEBI:29105"/>
        <note>ligand shared between dimeric partners</note>
    </ligand>
</feature>
<feature type="modified residue" description="N-acetylalanine" evidence="2">
    <location>
        <position position="2"/>
    </location>
</feature>
<feature type="sequence conflict" description="In Ref. 1; CAA73684." evidence="8" ref="1">
    <original>AAA</original>
    <variation>RP</variation>
    <location>
        <begin position="50"/>
        <end position="52"/>
    </location>
</feature>
<feature type="sequence conflict" description="In Ref. 2; BAC40796." evidence="8" ref="2">
    <original>Y</original>
    <variation>H</variation>
    <location>
        <position position="134"/>
    </location>
</feature>
<feature type="sequence conflict" description="In Ref. 1; CAA73684 and 2; BAC40796." evidence="8" ref="1 2">
    <original>F</original>
    <variation>L</variation>
    <location>
        <position position="181"/>
    </location>
</feature>
<feature type="helix" evidence="9">
    <location>
        <begin position="21"/>
        <end position="48"/>
    </location>
</feature>
<feature type="helix" evidence="9">
    <location>
        <begin position="49"/>
        <end position="51"/>
    </location>
</feature>
<feature type="helix" evidence="9">
    <location>
        <begin position="56"/>
        <end position="59"/>
    </location>
</feature>
<feature type="helix" evidence="9">
    <location>
        <begin position="68"/>
        <end position="83"/>
    </location>
</feature>
<feature type="helix" evidence="9">
    <location>
        <begin position="85"/>
        <end position="87"/>
    </location>
</feature>
<feature type="helix" evidence="9">
    <location>
        <begin position="88"/>
        <end position="95"/>
    </location>
</feature>
<feature type="helix" evidence="9">
    <location>
        <begin position="105"/>
        <end position="116"/>
    </location>
</feature>
<feature type="turn" evidence="9">
    <location>
        <begin position="117"/>
        <end position="119"/>
    </location>
</feature>
<feature type="helix" evidence="9">
    <location>
        <begin position="123"/>
        <end position="142"/>
    </location>
</feature>
<feature type="helix" evidence="9">
    <location>
        <begin position="149"/>
        <end position="162"/>
    </location>
</feature>
<feature type="helix" evidence="9">
    <location>
        <begin position="165"/>
        <end position="171"/>
    </location>
</feature>
<feature type="helix" evidence="9">
    <location>
        <begin position="175"/>
        <end position="181"/>
    </location>
</feature>
<reference key="1">
    <citation type="journal article" date="1997" name="Genomics">
        <title>Gene structure, cDNA sequence, and expression of murine Bak, a proapoptotic Bcl-2 family member.</title>
        <authorList>
            <person name="Ulrich E."/>
            <person name="Kauffmann-Zeh A."/>
            <person name="Hueber A.O."/>
            <person name="Williamson J."/>
            <person name="Chittenden T."/>
            <person name="Ma A."/>
            <person name="Evan G.I."/>
        </authorList>
    </citation>
    <scope>NUCLEOTIDE SEQUENCE [MRNA]</scope>
    <source>
        <strain>SWR/J</strain>
        <tissue>Liver</tissue>
    </source>
</reference>
<reference key="2">
    <citation type="journal article" date="2005" name="Science">
        <title>The transcriptional landscape of the mammalian genome.</title>
        <authorList>
            <person name="Carninci P."/>
            <person name="Kasukawa T."/>
            <person name="Katayama S."/>
            <person name="Gough J."/>
            <person name="Frith M.C."/>
            <person name="Maeda N."/>
            <person name="Oyama R."/>
            <person name="Ravasi T."/>
            <person name="Lenhard B."/>
            <person name="Wells C."/>
            <person name="Kodzius R."/>
            <person name="Shimokawa K."/>
            <person name="Bajic V.B."/>
            <person name="Brenner S.E."/>
            <person name="Batalov S."/>
            <person name="Forrest A.R."/>
            <person name="Zavolan M."/>
            <person name="Davis M.J."/>
            <person name="Wilming L.G."/>
            <person name="Aidinis V."/>
            <person name="Allen J.E."/>
            <person name="Ambesi-Impiombato A."/>
            <person name="Apweiler R."/>
            <person name="Aturaliya R.N."/>
            <person name="Bailey T.L."/>
            <person name="Bansal M."/>
            <person name="Baxter L."/>
            <person name="Beisel K.W."/>
            <person name="Bersano T."/>
            <person name="Bono H."/>
            <person name="Chalk A.M."/>
            <person name="Chiu K.P."/>
            <person name="Choudhary V."/>
            <person name="Christoffels A."/>
            <person name="Clutterbuck D.R."/>
            <person name="Crowe M.L."/>
            <person name="Dalla E."/>
            <person name="Dalrymple B.P."/>
            <person name="de Bono B."/>
            <person name="Della Gatta G."/>
            <person name="di Bernardo D."/>
            <person name="Down T."/>
            <person name="Engstrom P."/>
            <person name="Fagiolini M."/>
            <person name="Faulkner G."/>
            <person name="Fletcher C.F."/>
            <person name="Fukushima T."/>
            <person name="Furuno M."/>
            <person name="Futaki S."/>
            <person name="Gariboldi M."/>
            <person name="Georgii-Hemming P."/>
            <person name="Gingeras T.R."/>
            <person name="Gojobori T."/>
            <person name="Green R.E."/>
            <person name="Gustincich S."/>
            <person name="Harbers M."/>
            <person name="Hayashi Y."/>
            <person name="Hensch T.K."/>
            <person name="Hirokawa N."/>
            <person name="Hill D."/>
            <person name="Huminiecki L."/>
            <person name="Iacono M."/>
            <person name="Ikeo K."/>
            <person name="Iwama A."/>
            <person name="Ishikawa T."/>
            <person name="Jakt M."/>
            <person name="Kanapin A."/>
            <person name="Katoh M."/>
            <person name="Kawasawa Y."/>
            <person name="Kelso J."/>
            <person name="Kitamura H."/>
            <person name="Kitano H."/>
            <person name="Kollias G."/>
            <person name="Krishnan S.P."/>
            <person name="Kruger A."/>
            <person name="Kummerfeld S.K."/>
            <person name="Kurochkin I.V."/>
            <person name="Lareau L.F."/>
            <person name="Lazarevic D."/>
            <person name="Lipovich L."/>
            <person name="Liu J."/>
            <person name="Liuni S."/>
            <person name="McWilliam S."/>
            <person name="Madan Babu M."/>
            <person name="Madera M."/>
            <person name="Marchionni L."/>
            <person name="Matsuda H."/>
            <person name="Matsuzawa S."/>
            <person name="Miki H."/>
            <person name="Mignone F."/>
            <person name="Miyake S."/>
            <person name="Morris K."/>
            <person name="Mottagui-Tabar S."/>
            <person name="Mulder N."/>
            <person name="Nakano N."/>
            <person name="Nakauchi H."/>
            <person name="Ng P."/>
            <person name="Nilsson R."/>
            <person name="Nishiguchi S."/>
            <person name="Nishikawa S."/>
            <person name="Nori F."/>
            <person name="Ohara O."/>
            <person name="Okazaki Y."/>
            <person name="Orlando V."/>
            <person name="Pang K.C."/>
            <person name="Pavan W.J."/>
            <person name="Pavesi G."/>
            <person name="Pesole G."/>
            <person name="Petrovsky N."/>
            <person name="Piazza S."/>
            <person name="Reed J."/>
            <person name="Reid J.F."/>
            <person name="Ring B.Z."/>
            <person name="Ringwald M."/>
            <person name="Rost B."/>
            <person name="Ruan Y."/>
            <person name="Salzberg S.L."/>
            <person name="Sandelin A."/>
            <person name="Schneider C."/>
            <person name="Schoenbach C."/>
            <person name="Sekiguchi K."/>
            <person name="Semple C.A."/>
            <person name="Seno S."/>
            <person name="Sessa L."/>
            <person name="Sheng Y."/>
            <person name="Shibata Y."/>
            <person name="Shimada H."/>
            <person name="Shimada K."/>
            <person name="Silva D."/>
            <person name="Sinclair B."/>
            <person name="Sperling S."/>
            <person name="Stupka E."/>
            <person name="Sugiura K."/>
            <person name="Sultana R."/>
            <person name="Takenaka Y."/>
            <person name="Taki K."/>
            <person name="Tammoja K."/>
            <person name="Tan S.L."/>
            <person name="Tang S."/>
            <person name="Taylor M.S."/>
            <person name="Tegner J."/>
            <person name="Teichmann S.A."/>
            <person name="Ueda H.R."/>
            <person name="van Nimwegen E."/>
            <person name="Verardo R."/>
            <person name="Wei C.L."/>
            <person name="Yagi K."/>
            <person name="Yamanishi H."/>
            <person name="Zabarovsky E."/>
            <person name="Zhu S."/>
            <person name="Zimmer A."/>
            <person name="Hide W."/>
            <person name="Bult C."/>
            <person name="Grimmond S.M."/>
            <person name="Teasdale R.D."/>
            <person name="Liu E.T."/>
            <person name="Brusic V."/>
            <person name="Quackenbush J."/>
            <person name="Wahlestedt C."/>
            <person name="Mattick J.S."/>
            <person name="Hume D.A."/>
            <person name="Kai C."/>
            <person name="Sasaki D."/>
            <person name="Tomaru Y."/>
            <person name="Fukuda S."/>
            <person name="Kanamori-Katayama M."/>
            <person name="Suzuki M."/>
            <person name="Aoki J."/>
            <person name="Arakawa T."/>
            <person name="Iida J."/>
            <person name="Imamura K."/>
            <person name="Itoh M."/>
            <person name="Kato T."/>
            <person name="Kawaji H."/>
            <person name="Kawagashira N."/>
            <person name="Kawashima T."/>
            <person name="Kojima M."/>
            <person name="Kondo S."/>
            <person name="Konno H."/>
            <person name="Nakano K."/>
            <person name="Ninomiya N."/>
            <person name="Nishio T."/>
            <person name="Okada M."/>
            <person name="Plessy C."/>
            <person name="Shibata K."/>
            <person name="Shiraki T."/>
            <person name="Suzuki S."/>
            <person name="Tagami M."/>
            <person name="Waki K."/>
            <person name="Watahiki A."/>
            <person name="Okamura-Oho Y."/>
            <person name="Suzuki H."/>
            <person name="Kawai J."/>
            <person name="Hayashizaki Y."/>
        </authorList>
    </citation>
    <scope>NUCLEOTIDE SEQUENCE [LARGE SCALE MRNA]</scope>
    <source>
        <strain>NOD</strain>
    </source>
</reference>
<reference key="3">
    <citation type="journal article" date="2009" name="PLoS Biol.">
        <title>Lineage-specific biology revealed by a finished genome assembly of the mouse.</title>
        <authorList>
            <person name="Church D.M."/>
            <person name="Goodstadt L."/>
            <person name="Hillier L.W."/>
            <person name="Zody M.C."/>
            <person name="Goldstein S."/>
            <person name="She X."/>
            <person name="Bult C.J."/>
            <person name="Agarwala R."/>
            <person name="Cherry J.L."/>
            <person name="DiCuccio M."/>
            <person name="Hlavina W."/>
            <person name="Kapustin Y."/>
            <person name="Meric P."/>
            <person name="Maglott D."/>
            <person name="Birtle Z."/>
            <person name="Marques A.C."/>
            <person name="Graves T."/>
            <person name="Zhou S."/>
            <person name="Teague B."/>
            <person name="Potamousis K."/>
            <person name="Churas C."/>
            <person name="Place M."/>
            <person name="Herschleb J."/>
            <person name="Runnheim R."/>
            <person name="Forrest D."/>
            <person name="Amos-Landgraf J."/>
            <person name="Schwartz D.C."/>
            <person name="Cheng Z."/>
            <person name="Lindblad-Toh K."/>
            <person name="Eichler E.E."/>
            <person name="Ponting C.P."/>
        </authorList>
    </citation>
    <scope>NUCLEOTIDE SEQUENCE [LARGE SCALE GENOMIC DNA]</scope>
    <source>
        <strain>C57BL/6J</strain>
    </source>
</reference>
<reference key="4">
    <citation type="journal article" date="2006" name="PLoS Biol.">
        <title>IAN family critically regulates survival and development of T lymphocytes.</title>
        <authorList>
            <person name="Nitta T."/>
            <person name="Nasreen M."/>
            <person name="Seike T."/>
            <person name="Goji A."/>
            <person name="Ohigashi I."/>
            <person name="Miyazaki T."/>
            <person name="Ohta T."/>
            <person name="Kanno M."/>
            <person name="Takahama Y."/>
        </authorList>
    </citation>
    <scope>INTERACTION WITH GIMAP3 AND GIMAP5</scope>
</reference>
<reference key="5">
    <citation type="journal article" date="2010" name="Cell">
        <title>A tissue-specific atlas of mouse protein phosphorylation and expression.</title>
        <authorList>
            <person name="Huttlin E.L."/>
            <person name="Jedrychowski M.P."/>
            <person name="Elias J.E."/>
            <person name="Goswami T."/>
            <person name="Rad R."/>
            <person name="Beausoleil S.A."/>
            <person name="Villen J."/>
            <person name="Haas W."/>
            <person name="Sowa M.E."/>
            <person name="Gygi S.P."/>
        </authorList>
    </citation>
    <scope>IDENTIFICATION BY MASS SPECTROMETRY [LARGE SCALE ANALYSIS]</scope>
    <source>
        <tissue>Brown adipose tissue</tissue>
        <tissue>Liver</tissue>
        <tissue>Lung</tissue>
        <tissue>Spleen</tissue>
        <tissue>Testis</tissue>
    </source>
</reference>
<reference key="6">
    <citation type="journal article" date="2008" name="PLoS Pathog.">
        <title>Structural and biochemical bases for the inhibition of autophagy and apoptosis by viral BCL-2 of murine gamma-herpesvirus 68.</title>
        <authorList>
            <person name="Ku B."/>
            <person name="Woo J.S."/>
            <person name="Liang C."/>
            <person name="Lee K.H."/>
            <person name="Hong H.S."/>
            <person name="E X."/>
            <person name="Kim K.S."/>
            <person name="Jung J.U."/>
            <person name="Oh B.H."/>
        </authorList>
    </citation>
    <scope>INTERACTION WITH MURINE GAMMAHERPESVIRUS 68 PROTEIN VBCL2</scope>
</reference>
<reference key="7">
    <citation type="journal article" date="2008" name="Structure">
        <title>Structural plasticity underpins promiscuous binding of the prosurvival protein A1.</title>
        <authorList>
            <person name="Smits C."/>
            <person name="Czabotar P.E."/>
            <person name="Hinds M.G."/>
            <person name="Day C.L."/>
        </authorList>
    </citation>
    <scope>X-RAY CRYSTALLOGRAPHY (1.9 ANGSTROMS) OF 65-90 IN COMPLEX WITH BCL2A1</scope>
</reference>